<evidence type="ECO:0000250" key="1">
    <source>
        <dbReference type="UniProtKB" id="Q9DAW9"/>
    </source>
</evidence>
<evidence type="ECO:0000255" key="2">
    <source>
        <dbReference type="PROSITE-ProRule" id="PRU00044"/>
    </source>
</evidence>
<evidence type="ECO:0000256" key="3">
    <source>
        <dbReference type="SAM" id="MobiDB-lite"/>
    </source>
</evidence>
<evidence type="ECO:0000303" key="4">
    <source>
    </source>
</evidence>
<evidence type="ECO:0000305" key="5"/>
<evidence type="ECO:0007744" key="6">
    <source>
    </source>
</evidence>
<evidence type="ECO:0007744" key="7">
    <source>
    </source>
</evidence>
<protein>
    <recommendedName>
        <fullName>Calponin-3</fullName>
    </recommendedName>
    <alternativeName>
        <fullName>Calponin, acidic isoform</fullName>
    </alternativeName>
</protein>
<sequence length="329" mass="36414">MTHFNKGPSYGLSAEVKNKIASKYDHQAEEDLRNWIEEVTGMSIGPNFQLGLKDGIILCELINKLQPGSVKKVNESSLNWPQLENIGNFIKAIQAYGMKPHDIFEANDLFENGNMTQVQTTLVALAGLAKTKGFHTTIDIGVKYAEKQTRRFDEGKLKAGQSVIGLQMGTNKCASQAGMTAYGTRRHLYDPKMQTDKPFDQTTISLQMGTNKGASQAGMLAPGTRRDIYDQKLTLQPVDNSTISLQMGTNKVASQKGMSVYGLGRQVYDPKYCAAPTEPVIHNGSQGTGTNGSEISDSDYQAEYPDEYHGEYQDDYPRDYQYSDQGIDY</sequence>
<organism>
    <name type="scientific">Homo sapiens</name>
    <name type="common">Human</name>
    <dbReference type="NCBI Taxonomy" id="9606"/>
    <lineage>
        <taxon>Eukaryota</taxon>
        <taxon>Metazoa</taxon>
        <taxon>Chordata</taxon>
        <taxon>Craniata</taxon>
        <taxon>Vertebrata</taxon>
        <taxon>Euteleostomi</taxon>
        <taxon>Mammalia</taxon>
        <taxon>Eutheria</taxon>
        <taxon>Euarchontoglires</taxon>
        <taxon>Primates</taxon>
        <taxon>Haplorrhini</taxon>
        <taxon>Catarrhini</taxon>
        <taxon>Hominidae</taxon>
        <taxon>Homo</taxon>
    </lineage>
</organism>
<comment type="function">
    <text>Thin filament-associated protein that is implicated in the regulation and modulation of smooth muscle contraction. It is capable of binding to actin, calmodulin and tropomyosin. The interaction of calponin with actin inhibits the actomyosin Mg-ATPase activity.</text>
</comment>
<comment type="alternative products">
    <event type="alternative splicing"/>
    <isoform>
        <id>Q15417-1</id>
        <name>1</name>
        <sequence type="displayed"/>
    </isoform>
    <isoform>
        <id>Q15417-2</id>
        <name>2</name>
        <sequence type="described" ref="VSP_055191"/>
    </isoform>
    <isoform>
        <id>Q15417-3</id>
        <name>3</name>
        <sequence type="described" ref="VSP_055192"/>
    </isoform>
</comment>
<comment type="tissue specificity">
    <text>Expressed in both non-smooth muscle tissues as well as smooth muscle tissues.</text>
</comment>
<comment type="similarity">
    <text evidence="5">Belongs to the calponin family.</text>
</comment>
<gene>
    <name type="primary">CNN3</name>
</gene>
<dbReference type="EMBL" id="S80562">
    <property type="protein sequence ID" value="AAB35752.1"/>
    <property type="molecule type" value="mRNA"/>
</dbReference>
<dbReference type="EMBL" id="AK312370">
    <property type="protein sequence ID" value="BAG35288.1"/>
    <property type="molecule type" value="mRNA"/>
</dbReference>
<dbReference type="EMBL" id="AK294141">
    <property type="protein sequence ID" value="BAG57467.1"/>
    <property type="molecule type" value="mRNA"/>
</dbReference>
<dbReference type="EMBL" id="AK298145">
    <property type="protein sequence ID" value="BAG60421.1"/>
    <property type="molecule type" value="mRNA"/>
</dbReference>
<dbReference type="EMBL" id="AK316398">
    <property type="protein sequence ID" value="BAH14769.1"/>
    <property type="molecule type" value="mRNA"/>
</dbReference>
<dbReference type="EMBL" id="CR541848">
    <property type="protein sequence ID" value="CAG46646.1"/>
    <property type="molecule type" value="mRNA"/>
</dbReference>
<dbReference type="EMBL" id="AC093429">
    <property type="status" value="NOT_ANNOTATED_CDS"/>
    <property type="molecule type" value="Genomic_DNA"/>
</dbReference>
<dbReference type="EMBL" id="AC105942">
    <property type="status" value="NOT_ANNOTATED_CDS"/>
    <property type="molecule type" value="Genomic_DNA"/>
</dbReference>
<dbReference type="EMBL" id="AL359554">
    <property type="protein sequence ID" value="CAC36093.1"/>
    <property type="molecule type" value="Genomic_DNA"/>
</dbReference>
<dbReference type="EMBL" id="CH471097">
    <property type="protein sequence ID" value="EAW73029.1"/>
    <property type="molecule type" value="Genomic_DNA"/>
</dbReference>
<dbReference type="EMBL" id="BC025372">
    <property type="protein sequence ID" value="AAH25372.1"/>
    <property type="molecule type" value="mRNA"/>
</dbReference>
<dbReference type="CCDS" id="CCDS30775.1">
    <molecule id="Q15417-1"/>
</dbReference>
<dbReference type="CCDS" id="CCDS65592.1">
    <molecule id="Q15417-2"/>
</dbReference>
<dbReference type="CCDS" id="CCDS65593.1">
    <molecule id="Q15417-3"/>
</dbReference>
<dbReference type="PIR" id="JC4501">
    <property type="entry name" value="JC4501"/>
</dbReference>
<dbReference type="RefSeq" id="NP_001272984.1">
    <molecule id="Q15417-3"/>
    <property type="nucleotide sequence ID" value="NM_001286055.2"/>
</dbReference>
<dbReference type="RefSeq" id="NP_001272985.1">
    <molecule id="Q15417-2"/>
    <property type="nucleotide sequence ID" value="NM_001286056.2"/>
</dbReference>
<dbReference type="RefSeq" id="NP_001830.1">
    <molecule id="Q15417-1"/>
    <property type="nucleotide sequence ID" value="NM_001839.5"/>
</dbReference>
<dbReference type="RefSeq" id="XP_016855734.1">
    <property type="nucleotide sequence ID" value="XM_017000245.1"/>
</dbReference>
<dbReference type="RefSeq" id="XP_047300436.1">
    <molecule id="Q15417-2"/>
    <property type="nucleotide sequence ID" value="XM_047444480.1"/>
</dbReference>
<dbReference type="RefSeq" id="XP_047300442.1">
    <molecule id="Q15417-2"/>
    <property type="nucleotide sequence ID" value="XM_047444486.1"/>
</dbReference>
<dbReference type="RefSeq" id="XP_054190200.1">
    <molecule id="Q15417-2"/>
    <property type="nucleotide sequence ID" value="XM_054334225.1"/>
</dbReference>
<dbReference type="RefSeq" id="XP_054190201.1">
    <molecule id="Q15417-2"/>
    <property type="nucleotide sequence ID" value="XM_054334226.1"/>
</dbReference>
<dbReference type="SMR" id="Q15417"/>
<dbReference type="BioGRID" id="107666">
    <property type="interactions" value="77"/>
</dbReference>
<dbReference type="CORUM" id="Q15417"/>
<dbReference type="FunCoup" id="Q15417">
    <property type="interactions" value="502"/>
</dbReference>
<dbReference type="IntAct" id="Q15417">
    <property type="interactions" value="30"/>
</dbReference>
<dbReference type="MINT" id="Q15417"/>
<dbReference type="STRING" id="9606.ENSP00000359225"/>
<dbReference type="GlyConnect" id="1059">
    <property type="glycosylation" value="6 N-Linked glycans (1 site)"/>
</dbReference>
<dbReference type="GlyCosmos" id="Q15417">
    <property type="glycosylation" value="1 site, 5 glycans"/>
</dbReference>
<dbReference type="GlyGen" id="Q15417">
    <property type="glycosylation" value="2 sites, 14 N-linked glycans (1 site), 1 O-linked glycan (1 site)"/>
</dbReference>
<dbReference type="iPTMnet" id="Q15417"/>
<dbReference type="MetOSite" id="Q15417"/>
<dbReference type="PhosphoSitePlus" id="Q15417"/>
<dbReference type="SwissPalm" id="Q15417"/>
<dbReference type="BioMuta" id="CNN3"/>
<dbReference type="DMDM" id="6225157"/>
<dbReference type="jPOST" id="Q15417"/>
<dbReference type="MassIVE" id="Q15417"/>
<dbReference type="PaxDb" id="9606-ENSP00000359225"/>
<dbReference type="PeptideAtlas" id="Q15417"/>
<dbReference type="ProteomicsDB" id="30452"/>
<dbReference type="ProteomicsDB" id="4050"/>
<dbReference type="ProteomicsDB" id="60582">
    <molecule id="Q15417-1"/>
</dbReference>
<dbReference type="Pumba" id="Q15417"/>
<dbReference type="Antibodypedia" id="4078">
    <property type="antibodies" value="226 antibodies from 34 providers"/>
</dbReference>
<dbReference type="DNASU" id="1266"/>
<dbReference type="Ensembl" id="ENST00000370206.9">
    <molecule id="Q15417-1"/>
    <property type="protein sequence ID" value="ENSP00000359225.4"/>
    <property type="gene ID" value="ENSG00000117519.16"/>
</dbReference>
<dbReference type="Ensembl" id="ENST00000394202.8">
    <molecule id="Q15417-3"/>
    <property type="protein sequence ID" value="ENSP00000377752.4"/>
    <property type="gene ID" value="ENSG00000117519.16"/>
</dbReference>
<dbReference type="Ensembl" id="ENST00000545882.5">
    <molecule id="Q15417-2"/>
    <property type="protein sequence ID" value="ENSP00000440081.1"/>
    <property type="gene ID" value="ENSG00000117519.16"/>
</dbReference>
<dbReference type="GeneID" id="1266"/>
<dbReference type="KEGG" id="hsa:1266"/>
<dbReference type="MANE-Select" id="ENST00000370206.9">
    <property type="protein sequence ID" value="ENSP00000359225.4"/>
    <property type="RefSeq nucleotide sequence ID" value="NM_001839.5"/>
    <property type="RefSeq protein sequence ID" value="NP_001830.1"/>
</dbReference>
<dbReference type="UCSC" id="uc001dqz.6">
    <molecule id="Q15417-1"/>
    <property type="organism name" value="human"/>
</dbReference>
<dbReference type="AGR" id="HGNC:2157"/>
<dbReference type="CTD" id="1266"/>
<dbReference type="DisGeNET" id="1266"/>
<dbReference type="GeneCards" id="CNN3"/>
<dbReference type="HGNC" id="HGNC:2157">
    <property type="gene designation" value="CNN3"/>
</dbReference>
<dbReference type="HPA" id="ENSG00000117519">
    <property type="expression patterns" value="Low tissue specificity"/>
</dbReference>
<dbReference type="MIM" id="602374">
    <property type="type" value="gene"/>
</dbReference>
<dbReference type="neXtProt" id="NX_Q15417"/>
<dbReference type="OpenTargets" id="ENSG00000117519"/>
<dbReference type="PharmGKB" id="PA26667"/>
<dbReference type="VEuPathDB" id="HostDB:ENSG00000117519"/>
<dbReference type="eggNOG" id="KOG2046">
    <property type="taxonomic scope" value="Eukaryota"/>
</dbReference>
<dbReference type="GeneTree" id="ENSGT00940000154539"/>
<dbReference type="HOGENOM" id="CLU_055232_0_2_1"/>
<dbReference type="InParanoid" id="Q15417"/>
<dbReference type="OMA" id="YHSEYQD"/>
<dbReference type="OrthoDB" id="21595at2759"/>
<dbReference type="PAN-GO" id="Q15417">
    <property type="GO annotations" value="1 GO annotation based on evolutionary models"/>
</dbReference>
<dbReference type="PhylomeDB" id="Q15417"/>
<dbReference type="TreeFam" id="TF313921"/>
<dbReference type="PathwayCommons" id="Q15417"/>
<dbReference type="SignaLink" id="Q15417"/>
<dbReference type="SIGNOR" id="Q15417"/>
<dbReference type="BioGRID-ORCS" id="1266">
    <property type="hits" value="10 hits in 1147 CRISPR screens"/>
</dbReference>
<dbReference type="CD-CODE" id="DEE660B4">
    <property type="entry name" value="Stress granule"/>
</dbReference>
<dbReference type="ChiTaRS" id="CNN3">
    <property type="organism name" value="human"/>
</dbReference>
<dbReference type="GenomeRNAi" id="1266"/>
<dbReference type="Pharos" id="Q15417">
    <property type="development level" value="Tbio"/>
</dbReference>
<dbReference type="PRO" id="PR:Q15417"/>
<dbReference type="Proteomes" id="UP000005640">
    <property type="component" value="Chromosome 1"/>
</dbReference>
<dbReference type="RNAct" id="Q15417">
    <property type="molecule type" value="protein"/>
</dbReference>
<dbReference type="Bgee" id="ENSG00000117519">
    <property type="expression patterns" value="Expressed in ventricular zone and 205 other cell types or tissues"/>
</dbReference>
<dbReference type="ExpressionAtlas" id="Q15417">
    <property type="expression patterns" value="baseline and differential"/>
</dbReference>
<dbReference type="GO" id="GO:0015629">
    <property type="term" value="C:actin cytoskeleton"/>
    <property type="evidence" value="ECO:0000314"/>
    <property type="project" value="HPA"/>
</dbReference>
<dbReference type="GO" id="GO:0005912">
    <property type="term" value="C:adherens junction"/>
    <property type="evidence" value="ECO:0007005"/>
    <property type="project" value="BHF-UCL"/>
</dbReference>
<dbReference type="GO" id="GO:0005829">
    <property type="term" value="C:cytosol"/>
    <property type="evidence" value="ECO:0000314"/>
    <property type="project" value="HPA"/>
</dbReference>
<dbReference type="GO" id="GO:0005925">
    <property type="term" value="C:focal adhesion"/>
    <property type="evidence" value="ECO:0007005"/>
    <property type="project" value="UniProtKB"/>
</dbReference>
<dbReference type="GO" id="GO:0051015">
    <property type="term" value="F:actin filament binding"/>
    <property type="evidence" value="ECO:0000318"/>
    <property type="project" value="GO_Central"/>
</dbReference>
<dbReference type="GO" id="GO:0098641">
    <property type="term" value="F:cadherin binding involved in cell-cell adhesion"/>
    <property type="evidence" value="ECO:0007005"/>
    <property type="project" value="BHF-UCL"/>
</dbReference>
<dbReference type="GO" id="GO:0005516">
    <property type="term" value="F:calmodulin binding"/>
    <property type="evidence" value="ECO:0007669"/>
    <property type="project" value="UniProtKB-KW"/>
</dbReference>
<dbReference type="GO" id="GO:0007015">
    <property type="term" value="P:actin filament organization"/>
    <property type="evidence" value="ECO:0000318"/>
    <property type="project" value="GO_Central"/>
</dbReference>
<dbReference type="GO" id="GO:0031032">
    <property type="term" value="P:actomyosin structure organization"/>
    <property type="evidence" value="ECO:0007669"/>
    <property type="project" value="InterPro"/>
</dbReference>
<dbReference type="GO" id="GO:0030855">
    <property type="term" value="P:epithelial cell differentiation"/>
    <property type="evidence" value="ECO:0000270"/>
    <property type="project" value="UniProtKB"/>
</dbReference>
<dbReference type="CDD" id="cd21284">
    <property type="entry name" value="CH_CNN3"/>
    <property type="match status" value="1"/>
</dbReference>
<dbReference type="FunFam" id="1.10.418.10:FF:000040">
    <property type="entry name" value="Calponin"/>
    <property type="match status" value="1"/>
</dbReference>
<dbReference type="Gene3D" id="1.10.418.10">
    <property type="entry name" value="Calponin-like domain"/>
    <property type="match status" value="1"/>
</dbReference>
<dbReference type="InterPro" id="IPR050606">
    <property type="entry name" value="Calponin-like"/>
</dbReference>
<dbReference type="InterPro" id="IPR001997">
    <property type="entry name" value="Calponin/LIMCH1"/>
</dbReference>
<dbReference type="InterPro" id="IPR000557">
    <property type="entry name" value="Calponin_repeat"/>
</dbReference>
<dbReference type="InterPro" id="IPR001715">
    <property type="entry name" value="CH_dom"/>
</dbReference>
<dbReference type="InterPro" id="IPR036872">
    <property type="entry name" value="CH_dom_sf"/>
</dbReference>
<dbReference type="InterPro" id="IPR003096">
    <property type="entry name" value="SM22_calponin"/>
</dbReference>
<dbReference type="PANTHER" id="PTHR47385">
    <property type="entry name" value="CALPONIN"/>
    <property type="match status" value="1"/>
</dbReference>
<dbReference type="PANTHER" id="PTHR47385:SF24">
    <property type="entry name" value="MUSCLE-SPECIFIC PROTEIN 20"/>
    <property type="match status" value="1"/>
</dbReference>
<dbReference type="Pfam" id="PF00402">
    <property type="entry name" value="Calponin"/>
    <property type="match status" value="3"/>
</dbReference>
<dbReference type="Pfam" id="PF00307">
    <property type="entry name" value="CH"/>
    <property type="match status" value="1"/>
</dbReference>
<dbReference type="PRINTS" id="PR00889">
    <property type="entry name" value="CALPONIN"/>
</dbReference>
<dbReference type="PRINTS" id="PR00888">
    <property type="entry name" value="SM22CALPONIN"/>
</dbReference>
<dbReference type="SMART" id="SM00033">
    <property type="entry name" value="CH"/>
    <property type="match status" value="1"/>
</dbReference>
<dbReference type="SUPFAM" id="SSF47576">
    <property type="entry name" value="Calponin-homology domain, CH-domain"/>
    <property type="match status" value="1"/>
</dbReference>
<dbReference type="PROSITE" id="PS01052">
    <property type="entry name" value="CALPONIN_1"/>
    <property type="match status" value="3"/>
</dbReference>
<dbReference type="PROSITE" id="PS51122">
    <property type="entry name" value="CALPONIN_2"/>
    <property type="match status" value="3"/>
</dbReference>
<dbReference type="PROSITE" id="PS50021">
    <property type="entry name" value="CH"/>
    <property type="match status" value="1"/>
</dbReference>
<keyword id="KW-0007">Acetylation</keyword>
<keyword id="KW-0009">Actin-binding</keyword>
<keyword id="KW-0025">Alternative splicing</keyword>
<keyword id="KW-0112">Calmodulin-binding</keyword>
<keyword id="KW-0903">Direct protein sequencing</keyword>
<keyword id="KW-0488">Methylation</keyword>
<keyword id="KW-0597">Phosphoprotein</keyword>
<keyword id="KW-1267">Proteomics identification</keyword>
<keyword id="KW-1185">Reference proteome</keyword>
<keyword id="KW-0677">Repeat</keyword>
<accession>Q15417</accession>
<accession>B4DFK6</accession>
<accession>B4DP09</accession>
<accession>F8WA86</accession>
<accession>Q6FHA7</accession>
<proteinExistence type="evidence at protein level"/>
<name>CNN3_HUMAN</name>
<reference key="1">
    <citation type="journal article" date="1995" name="Biochem. Biophys. Res. Commun.">
        <title>Molecular cloning and gene mapping of human basic and acidic calponins.</title>
        <authorList>
            <person name="Maguchi M."/>
            <person name="Nishida W."/>
            <person name="Kohara K."/>
            <person name="Kuwano A."/>
            <person name="Kondo I."/>
            <person name="Hiwada K."/>
        </authorList>
    </citation>
    <scope>NUCLEOTIDE SEQUENCE [MRNA] (ISOFORM 1)</scope>
    <source>
        <tissue>Kidney</tissue>
    </source>
</reference>
<reference key="2">
    <citation type="journal article" date="2004" name="Nat. Genet.">
        <title>Complete sequencing and characterization of 21,243 full-length human cDNAs.</title>
        <authorList>
            <person name="Ota T."/>
            <person name="Suzuki Y."/>
            <person name="Nishikawa T."/>
            <person name="Otsuki T."/>
            <person name="Sugiyama T."/>
            <person name="Irie R."/>
            <person name="Wakamatsu A."/>
            <person name="Hayashi K."/>
            <person name="Sato H."/>
            <person name="Nagai K."/>
            <person name="Kimura K."/>
            <person name="Makita H."/>
            <person name="Sekine M."/>
            <person name="Obayashi M."/>
            <person name="Nishi T."/>
            <person name="Shibahara T."/>
            <person name="Tanaka T."/>
            <person name="Ishii S."/>
            <person name="Yamamoto J."/>
            <person name="Saito K."/>
            <person name="Kawai Y."/>
            <person name="Isono Y."/>
            <person name="Nakamura Y."/>
            <person name="Nagahari K."/>
            <person name="Murakami K."/>
            <person name="Yasuda T."/>
            <person name="Iwayanagi T."/>
            <person name="Wagatsuma M."/>
            <person name="Shiratori A."/>
            <person name="Sudo H."/>
            <person name="Hosoiri T."/>
            <person name="Kaku Y."/>
            <person name="Kodaira H."/>
            <person name="Kondo H."/>
            <person name="Sugawara M."/>
            <person name="Takahashi M."/>
            <person name="Kanda K."/>
            <person name="Yokoi T."/>
            <person name="Furuya T."/>
            <person name="Kikkawa E."/>
            <person name="Omura Y."/>
            <person name="Abe K."/>
            <person name="Kamihara K."/>
            <person name="Katsuta N."/>
            <person name="Sato K."/>
            <person name="Tanikawa M."/>
            <person name="Yamazaki M."/>
            <person name="Ninomiya K."/>
            <person name="Ishibashi T."/>
            <person name="Yamashita H."/>
            <person name="Murakawa K."/>
            <person name="Fujimori K."/>
            <person name="Tanai H."/>
            <person name="Kimata M."/>
            <person name="Watanabe M."/>
            <person name="Hiraoka S."/>
            <person name="Chiba Y."/>
            <person name="Ishida S."/>
            <person name="Ono Y."/>
            <person name="Takiguchi S."/>
            <person name="Watanabe S."/>
            <person name="Yosida M."/>
            <person name="Hotuta T."/>
            <person name="Kusano J."/>
            <person name="Kanehori K."/>
            <person name="Takahashi-Fujii A."/>
            <person name="Hara H."/>
            <person name="Tanase T.-O."/>
            <person name="Nomura Y."/>
            <person name="Togiya S."/>
            <person name="Komai F."/>
            <person name="Hara R."/>
            <person name="Takeuchi K."/>
            <person name="Arita M."/>
            <person name="Imose N."/>
            <person name="Musashino K."/>
            <person name="Yuuki H."/>
            <person name="Oshima A."/>
            <person name="Sasaki N."/>
            <person name="Aotsuka S."/>
            <person name="Yoshikawa Y."/>
            <person name="Matsunawa H."/>
            <person name="Ichihara T."/>
            <person name="Shiohata N."/>
            <person name="Sano S."/>
            <person name="Moriya S."/>
            <person name="Momiyama H."/>
            <person name="Satoh N."/>
            <person name="Takami S."/>
            <person name="Terashima Y."/>
            <person name="Suzuki O."/>
            <person name="Nakagawa S."/>
            <person name="Senoh A."/>
            <person name="Mizoguchi H."/>
            <person name="Goto Y."/>
            <person name="Shimizu F."/>
            <person name="Wakebe H."/>
            <person name="Hishigaki H."/>
            <person name="Watanabe T."/>
            <person name="Sugiyama A."/>
            <person name="Takemoto M."/>
            <person name="Kawakami B."/>
            <person name="Yamazaki M."/>
            <person name="Watanabe K."/>
            <person name="Kumagai A."/>
            <person name="Itakura S."/>
            <person name="Fukuzumi Y."/>
            <person name="Fujimori Y."/>
            <person name="Komiyama M."/>
            <person name="Tashiro H."/>
            <person name="Tanigami A."/>
            <person name="Fujiwara T."/>
            <person name="Ono T."/>
            <person name="Yamada K."/>
            <person name="Fujii Y."/>
            <person name="Ozaki K."/>
            <person name="Hirao M."/>
            <person name="Ohmori Y."/>
            <person name="Kawabata A."/>
            <person name="Hikiji T."/>
            <person name="Kobatake N."/>
            <person name="Inagaki H."/>
            <person name="Ikema Y."/>
            <person name="Okamoto S."/>
            <person name="Okitani R."/>
            <person name="Kawakami T."/>
            <person name="Noguchi S."/>
            <person name="Itoh T."/>
            <person name="Shigeta K."/>
            <person name="Senba T."/>
            <person name="Matsumura K."/>
            <person name="Nakajima Y."/>
            <person name="Mizuno T."/>
            <person name="Morinaga M."/>
            <person name="Sasaki M."/>
            <person name="Togashi T."/>
            <person name="Oyama M."/>
            <person name="Hata H."/>
            <person name="Watanabe M."/>
            <person name="Komatsu T."/>
            <person name="Mizushima-Sugano J."/>
            <person name="Satoh T."/>
            <person name="Shirai Y."/>
            <person name="Takahashi Y."/>
            <person name="Nakagawa K."/>
            <person name="Okumura K."/>
            <person name="Nagase T."/>
            <person name="Nomura N."/>
            <person name="Kikuchi H."/>
            <person name="Masuho Y."/>
            <person name="Yamashita R."/>
            <person name="Nakai K."/>
            <person name="Yada T."/>
            <person name="Nakamura Y."/>
            <person name="Ohara O."/>
            <person name="Isogai T."/>
            <person name="Sugano S."/>
        </authorList>
    </citation>
    <scope>NUCLEOTIDE SEQUENCE [LARGE SCALE MRNA] (ISOFORMS 1; 2 AND 3)</scope>
    <source>
        <tissue>Amygdala</tissue>
    </source>
</reference>
<reference key="3">
    <citation type="submission" date="2004-06" db="EMBL/GenBank/DDBJ databases">
        <title>Cloning of human full open reading frames in Gateway(TM) system entry vector (pDONR201).</title>
        <authorList>
            <person name="Ebert L."/>
            <person name="Schick M."/>
            <person name="Neubert P."/>
            <person name="Schatten R."/>
            <person name="Henze S."/>
            <person name="Korn B."/>
        </authorList>
    </citation>
    <scope>NUCLEOTIDE SEQUENCE [LARGE SCALE MRNA] (ISOFORM 1)</scope>
</reference>
<reference key="4">
    <citation type="journal article" date="2006" name="Nature">
        <title>The DNA sequence and biological annotation of human chromosome 1.</title>
        <authorList>
            <person name="Gregory S.G."/>
            <person name="Barlow K.F."/>
            <person name="McLay K.E."/>
            <person name="Kaul R."/>
            <person name="Swarbreck D."/>
            <person name="Dunham A."/>
            <person name="Scott C.E."/>
            <person name="Howe K.L."/>
            <person name="Woodfine K."/>
            <person name="Spencer C.C.A."/>
            <person name="Jones M.C."/>
            <person name="Gillson C."/>
            <person name="Searle S."/>
            <person name="Zhou Y."/>
            <person name="Kokocinski F."/>
            <person name="McDonald L."/>
            <person name="Evans R."/>
            <person name="Phillips K."/>
            <person name="Atkinson A."/>
            <person name="Cooper R."/>
            <person name="Jones C."/>
            <person name="Hall R.E."/>
            <person name="Andrews T.D."/>
            <person name="Lloyd C."/>
            <person name="Ainscough R."/>
            <person name="Almeida J.P."/>
            <person name="Ambrose K.D."/>
            <person name="Anderson F."/>
            <person name="Andrew R.W."/>
            <person name="Ashwell R.I.S."/>
            <person name="Aubin K."/>
            <person name="Babbage A.K."/>
            <person name="Bagguley C.L."/>
            <person name="Bailey J."/>
            <person name="Beasley H."/>
            <person name="Bethel G."/>
            <person name="Bird C.P."/>
            <person name="Bray-Allen S."/>
            <person name="Brown J.Y."/>
            <person name="Brown A.J."/>
            <person name="Buckley D."/>
            <person name="Burton J."/>
            <person name="Bye J."/>
            <person name="Carder C."/>
            <person name="Chapman J.C."/>
            <person name="Clark S.Y."/>
            <person name="Clarke G."/>
            <person name="Clee C."/>
            <person name="Cobley V."/>
            <person name="Collier R.E."/>
            <person name="Corby N."/>
            <person name="Coville G.J."/>
            <person name="Davies J."/>
            <person name="Deadman R."/>
            <person name="Dunn M."/>
            <person name="Earthrowl M."/>
            <person name="Ellington A.G."/>
            <person name="Errington H."/>
            <person name="Frankish A."/>
            <person name="Frankland J."/>
            <person name="French L."/>
            <person name="Garner P."/>
            <person name="Garnett J."/>
            <person name="Gay L."/>
            <person name="Ghori M.R.J."/>
            <person name="Gibson R."/>
            <person name="Gilby L.M."/>
            <person name="Gillett W."/>
            <person name="Glithero R.J."/>
            <person name="Grafham D.V."/>
            <person name="Griffiths C."/>
            <person name="Griffiths-Jones S."/>
            <person name="Grocock R."/>
            <person name="Hammond S."/>
            <person name="Harrison E.S.I."/>
            <person name="Hart E."/>
            <person name="Haugen E."/>
            <person name="Heath P.D."/>
            <person name="Holmes S."/>
            <person name="Holt K."/>
            <person name="Howden P.J."/>
            <person name="Hunt A.R."/>
            <person name="Hunt S.E."/>
            <person name="Hunter G."/>
            <person name="Isherwood J."/>
            <person name="James R."/>
            <person name="Johnson C."/>
            <person name="Johnson D."/>
            <person name="Joy A."/>
            <person name="Kay M."/>
            <person name="Kershaw J.K."/>
            <person name="Kibukawa M."/>
            <person name="Kimberley A.M."/>
            <person name="King A."/>
            <person name="Knights A.J."/>
            <person name="Lad H."/>
            <person name="Laird G."/>
            <person name="Lawlor S."/>
            <person name="Leongamornlert D.A."/>
            <person name="Lloyd D.M."/>
            <person name="Loveland J."/>
            <person name="Lovell J."/>
            <person name="Lush M.J."/>
            <person name="Lyne R."/>
            <person name="Martin S."/>
            <person name="Mashreghi-Mohammadi M."/>
            <person name="Matthews L."/>
            <person name="Matthews N.S.W."/>
            <person name="McLaren S."/>
            <person name="Milne S."/>
            <person name="Mistry S."/>
            <person name="Moore M.J.F."/>
            <person name="Nickerson T."/>
            <person name="O'Dell C.N."/>
            <person name="Oliver K."/>
            <person name="Palmeiri A."/>
            <person name="Palmer S.A."/>
            <person name="Parker A."/>
            <person name="Patel D."/>
            <person name="Pearce A.V."/>
            <person name="Peck A.I."/>
            <person name="Pelan S."/>
            <person name="Phelps K."/>
            <person name="Phillimore B.J."/>
            <person name="Plumb R."/>
            <person name="Rajan J."/>
            <person name="Raymond C."/>
            <person name="Rouse G."/>
            <person name="Saenphimmachak C."/>
            <person name="Sehra H.K."/>
            <person name="Sheridan E."/>
            <person name="Shownkeen R."/>
            <person name="Sims S."/>
            <person name="Skuce C.D."/>
            <person name="Smith M."/>
            <person name="Steward C."/>
            <person name="Subramanian S."/>
            <person name="Sycamore N."/>
            <person name="Tracey A."/>
            <person name="Tromans A."/>
            <person name="Van Helmond Z."/>
            <person name="Wall M."/>
            <person name="Wallis J.M."/>
            <person name="White S."/>
            <person name="Whitehead S.L."/>
            <person name="Wilkinson J.E."/>
            <person name="Willey D.L."/>
            <person name="Williams H."/>
            <person name="Wilming L."/>
            <person name="Wray P.W."/>
            <person name="Wu Z."/>
            <person name="Coulson A."/>
            <person name="Vaudin M."/>
            <person name="Sulston J.E."/>
            <person name="Durbin R.M."/>
            <person name="Hubbard T."/>
            <person name="Wooster R."/>
            <person name="Dunham I."/>
            <person name="Carter N.P."/>
            <person name="McVean G."/>
            <person name="Ross M.T."/>
            <person name="Harrow J."/>
            <person name="Olson M.V."/>
            <person name="Beck S."/>
            <person name="Rogers J."/>
            <person name="Bentley D.R."/>
        </authorList>
    </citation>
    <scope>NUCLEOTIDE SEQUENCE [LARGE SCALE GENOMIC DNA]</scope>
</reference>
<reference key="5">
    <citation type="submission" date="2005-09" db="EMBL/GenBank/DDBJ databases">
        <authorList>
            <person name="Mural R.J."/>
            <person name="Istrail S."/>
            <person name="Sutton G."/>
            <person name="Florea L."/>
            <person name="Halpern A.L."/>
            <person name="Mobarry C.M."/>
            <person name="Lippert R."/>
            <person name="Walenz B."/>
            <person name="Shatkay H."/>
            <person name="Dew I."/>
            <person name="Miller J.R."/>
            <person name="Flanigan M.J."/>
            <person name="Edwards N.J."/>
            <person name="Bolanos R."/>
            <person name="Fasulo D."/>
            <person name="Halldorsson B.V."/>
            <person name="Hannenhalli S."/>
            <person name="Turner R."/>
            <person name="Yooseph S."/>
            <person name="Lu F."/>
            <person name="Nusskern D.R."/>
            <person name="Shue B.C."/>
            <person name="Zheng X.H."/>
            <person name="Zhong F."/>
            <person name="Delcher A.L."/>
            <person name="Huson D.H."/>
            <person name="Kravitz S.A."/>
            <person name="Mouchard L."/>
            <person name="Reinert K."/>
            <person name="Remington K.A."/>
            <person name="Clark A.G."/>
            <person name="Waterman M.S."/>
            <person name="Eichler E.E."/>
            <person name="Adams M.D."/>
            <person name="Hunkapiller M.W."/>
            <person name="Myers E.W."/>
            <person name="Venter J.C."/>
        </authorList>
    </citation>
    <scope>NUCLEOTIDE SEQUENCE [LARGE SCALE GENOMIC DNA]</scope>
</reference>
<reference key="6">
    <citation type="journal article" date="2004" name="Genome Res.">
        <title>The status, quality, and expansion of the NIH full-length cDNA project: the Mammalian Gene Collection (MGC).</title>
        <authorList>
            <consortium name="The MGC Project Team"/>
        </authorList>
    </citation>
    <scope>NUCLEOTIDE SEQUENCE [LARGE SCALE MRNA] (ISOFORM 1)</scope>
    <source>
        <tissue>Placenta</tissue>
    </source>
</reference>
<reference key="7">
    <citation type="submission" date="2008-12" db="UniProtKB">
        <authorList>
            <person name="Lubec G."/>
            <person name="Chen W.-Q."/>
            <person name="Sun Y."/>
        </authorList>
    </citation>
    <scope>PROTEIN SEQUENCE OF 54-64</scope>
    <scope>IDENTIFICATION BY MASS SPECTROMETRY</scope>
    <source>
        <tissue>Fetal brain cortex</tissue>
    </source>
</reference>
<reference key="8">
    <citation type="journal article" date="2011" name="BMC Syst. Biol.">
        <title>Initial characterization of the human central proteome.</title>
        <authorList>
            <person name="Burkard T.R."/>
            <person name="Planyavsky M."/>
            <person name="Kaupe I."/>
            <person name="Breitwieser F.P."/>
            <person name="Buerckstuemmer T."/>
            <person name="Bennett K.L."/>
            <person name="Superti-Furga G."/>
            <person name="Colinge J."/>
        </authorList>
    </citation>
    <scope>IDENTIFICATION BY MASS SPECTROMETRY [LARGE SCALE ANALYSIS]</scope>
</reference>
<reference key="9">
    <citation type="journal article" date="2011" name="Sci. Signal.">
        <title>System-wide temporal characterization of the proteome and phosphoproteome of human embryonic stem cell differentiation.</title>
        <authorList>
            <person name="Rigbolt K.T."/>
            <person name="Prokhorova T.A."/>
            <person name="Akimov V."/>
            <person name="Henningsen J."/>
            <person name="Johansen P.T."/>
            <person name="Kratchmarova I."/>
            <person name="Kassem M."/>
            <person name="Mann M."/>
            <person name="Olsen J.V."/>
            <person name="Blagoev B."/>
        </authorList>
    </citation>
    <scope>PHOSPHORYLATION [LARGE SCALE ANALYSIS] AT SER-323</scope>
    <scope>IDENTIFICATION BY MASS SPECTROMETRY [LARGE SCALE ANALYSIS]</scope>
</reference>
<reference key="10">
    <citation type="journal article" date="2014" name="J. Proteomics">
        <title>An enzyme assisted RP-RPLC approach for in-depth analysis of human liver phosphoproteome.</title>
        <authorList>
            <person name="Bian Y."/>
            <person name="Song C."/>
            <person name="Cheng K."/>
            <person name="Dong M."/>
            <person name="Wang F."/>
            <person name="Huang J."/>
            <person name="Sun D."/>
            <person name="Wang L."/>
            <person name="Ye M."/>
            <person name="Zou H."/>
        </authorList>
    </citation>
    <scope>IDENTIFICATION BY MASS SPECTROMETRY [LARGE SCALE ANALYSIS]</scope>
    <source>
        <tissue>Liver</tissue>
    </source>
</reference>
<reference key="11">
    <citation type="journal article" date="2014" name="Mol. Cell. Proteomics">
        <title>Immunoaffinity enrichment and mass spectrometry analysis of protein methylation.</title>
        <authorList>
            <person name="Guo A."/>
            <person name="Gu H."/>
            <person name="Zhou J."/>
            <person name="Mulhern D."/>
            <person name="Wang Y."/>
            <person name="Lee K.A."/>
            <person name="Yang V."/>
            <person name="Aguiar M."/>
            <person name="Kornhauser J."/>
            <person name="Jia X."/>
            <person name="Ren J."/>
            <person name="Beausoleil S.A."/>
            <person name="Silva J.C."/>
            <person name="Vemulapalli V."/>
            <person name="Bedford M.T."/>
            <person name="Comb M.J."/>
        </authorList>
    </citation>
    <scope>METHYLATION [LARGE SCALE ANALYSIS] AT LYS-158</scope>
    <scope>IDENTIFICATION BY MASS SPECTROMETRY [LARGE SCALE ANALYSIS]</scope>
    <source>
        <tissue>Colon carcinoma</tissue>
    </source>
</reference>
<feature type="chain" id="PRO_0000204776" description="Calponin-3">
    <location>
        <begin position="1"/>
        <end position="329"/>
    </location>
</feature>
<feature type="domain" description="Calponin-homology (CH)" evidence="2">
    <location>
        <begin position="26"/>
        <end position="130"/>
    </location>
</feature>
<feature type="repeat" description="Calponin-like 1">
    <location>
        <begin position="164"/>
        <end position="189"/>
    </location>
</feature>
<feature type="repeat" description="Calponin-like 2">
    <location>
        <begin position="204"/>
        <end position="229"/>
    </location>
</feature>
<feature type="repeat" description="Calponin-like 3">
    <location>
        <begin position="243"/>
        <end position="268"/>
    </location>
</feature>
<feature type="region of interest" description="Disordered" evidence="3">
    <location>
        <begin position="279"/>
        <end position="329"/>
    </location>
</feature>
<feature type="compositionally biased region" description="Basic and acidic residues" evidence="3">
    <location>
        <begin position="306"/>
        <end position="318"/>
    </location>
</feature>
<feature type="modified residue" description="N6-acetyllysine" evidence="1">
    <location>
        <position position="23"/>
    </location>
</feature>
<feature type="modified residue" description="N6-methyllysine" evidence="7">
    <location>
        <position position="158"/>
    </location>
</feature>
<feature type="modified residue" description="Phosphoserine" evidence="6">
    <location>
        <position position="323"/>
    </location>
</feature>
<feature type="splice variant" id="VSP_055191" description="In isoform 2." evidence="4">
    <location>
        <begin position="1"/>
        <end position="41"/>
    </location>
</feature>
<feature type="splice variant" id="VSP_055192" description="In isoform 3." evidence="4">
    <location>
        <begin position="83"/>
        <end position="128"/>
    </location>
</feature>
<feature type="sequence conflict" description="In Ref. 2; BAG60421." evidence="5" ref="2">
    <original>A</original>
    <variation>S</variation>
    <location>
        <position position="21"/>
    </location>
</feature>